<protein>
    <recommendedName>
        <fullName evidence="1">Ribonuclease HII</fullName>
        <shortName evidence="1">RNase HII</shortName>
        <ecNumber evidence="1">3.1.26.4</ecNumber>
    </recommendedName>
</protein>
<accession>Q7VRD2</accession>
<feature type="chain" id="PRO_0000111555" description="Ribonuclease HII">
    <location>
        <begin position="1"/>
        <end position="205"/>
    </location>
</feature>
<feature type="domain" description="RNase H type-2" evidence="2">
    <location>
        <begin position="13"/>
        <end position="205"/>
    </location>
</feature>
<feature type="binding site" evidence="1">
    <location>
        <position position="19"/>
    </location>
    <ligand>
        <name>a divalent metal cation</name>
        <dbReference type="ChEBI" id="CHEBI:60240"/>
    </ligand>
</feature>
<feature type="binding site" evidence="1">
    <location>
        <position position="20"/>
    </location>
    <ligand>
        <name>a divalent metal cation</name>
        <dbReference type="ChEBI" id="CHEBI:60240"/>
    </ligand>
</feature>
<feature type="binding site" evidence="1">
    <location>
        <position position="114"/>
    </location>
    <ligand>
        <name>a divalent metal cation</name>
        <dbReference type="ChEBI" id="CHEBI:60240"/>
    </ligand>
</feature>
<gene>
    <name evidence="1" type="primary">rnhB</name>
    <name type="ordered locus">Bfl285</name>
</gene>
<reference key="1">
    <citation type="journal article" date="2003" name="Proc. Natl. Acad. Sci. U.S.A.">
        <title>The genome sequence of Blochmannia floridanus: comparative analysis of reduced genomes.</title>
        <authorList>
            <person name="Gil R."/>
            <person name="Silva F.J."/>
            <person name="Zientz E."/>
            <person name="Delmotte F."/>
            <person name="Gonzalez-Candelas F."/>
            <person name="Latorre A."/>
            <person name="Rausell C."/>
            <person name="Kamerbeek J."/>
            <person name="Gadau J."/>
            <person name="Hoelldobler B."/>
            <person name="van Ham R.C.H.J."/>
            <person name="Gross R."/>
            <person name="Moya A."/>
        </authorList>
    </citation>
    <scope>NUCLEOTIDE SEQUENCE [LARGE SCALE GENOMIC DNA]</scope>
</reference>
<organism>
    <name type="scientific">Blochmanniella floridana</name>
    <dbReference type="NCBI Taxonomy" id="203907"/>
    <lineage>
        <taxon>Bacteria</taxon>
        <taxon>Pseudomonadati</taxon>
        <taxon>Pseudomonadota</taxon>
        <taxon>Gammaproteobacteria</taxon>
        <taxon>Enterobacterales</taxon>
        <taxon>Enterobacteriaceae</taxon>
        <taxon>ant endosymbionts</taxon>
        <taxon>Candidatus Blochmanniella</taxon>
    </lineage>
</organism>
<keyword id="KW-0963">Cytoplasm</keyword>
<keyword id="KW-0255">Endonuclease</keyword>
<keyword id="KW-0378">Hydrolase</keyword>
<keyword id="KW-0464">Manganese</keyword>
<keyword id="KW-0479">Metal-binding</keyword>
<keyword id="KW-0540">Nuclease</keyword>
<keyword id="KW-1185">Reference proteome</keyword>
<dbReference type="EC" id="3.1.26.4" evidence="1"/>
<dbReference type="EMBL" id="BX248583">
    <property type="protein sequence ID" value="CAD83356.1"/>
    <property type="molecule type" value="Genomic_DNA"/>
</dbReference>
<dbReference type="SMR" id="Q7VRD2"/>
<dbReference type="STRING" id="203907.Bfl285"/>
<dbReference type="KEGG" id="bfl:Bfl285"/>
<dbReference type="eggNOG" id="COG0164">
    <property type="taxonomic scope" value="Bacteria"/>
</dbReference>
<dbReference type="HOGENOM" id="CLU_036532_3_2_6"/>
<dbReference type="OrthoDB" id="9803420at2"/>
<dbReference type="Proteomes" id="UP000002192">
    <property type="component" value="Chromosome"/>
</dbReference>
<dbReference type="GO" id="GO:0005737">
    <property type="term" value="C:cytoplasm"/>
    <property type="evidence" value="ECO:0007669"/>
    <property type="project" value="UniProtKB-SubCell"/>
</dbReference>
<dbReference type="GO" id="GO:0032299">
    <property type="term" value="C:ribonuclease H2 complex"/>
    <property type="evidence" value="ECO:0007669"/>
    <property type="project" value="TreeGrafter"/>
</dbReference>
<dbReference type="GO" id="GO:0030145">
    <property type="term" value="F:manganese ion binding"/>
    <property type="evidence" value="ECO:0007669"/>
    <property type="project" value="UniProtKB-UniRule"/>
</dbReference>
<dbReference type="GO" id="GO:0003723">
    <property type="term" value="F:RNA binding"/>
    <property type="evidence" value="ECO:0007669"/>
    <property type="project" value="InterPro"/>
</dbReference>
<dbReference type="GO" id="GO:0004523">
    <property type="term" value="F:RNA-DNA hybrid ribonuclease activity"/>
    <property type="evidence" value="ECO:0007669"/>
    <property type="project" value="UniProtKB-UniRule"/>
</dbReference>
<dbReference type="GO" id="GO:0043137">
    <property type="term" value="P:DNA replication, removal of RNA primer"/>
    <property type="evidence" value="ECO:0007669"/>
    <property type="project" value="TreeGrafter"/>
</dbReference>
<dbReference type="GO" id="GO:0006298">
    <property type="term" value="P:mismatch repair"/>
    <property type="evidence" value="ECO:0007669"/>
    <property type="project" value="TreeGrafter"/>
</dbReference>
<dbReference type="CDD" id="cd07182">
    <property type="entry name" value="RNase_HII_bacteria_HII_like"/>
    <property type="match status" value="1"/>
</dbReference>
<dbReference type="Gene3D" id="3.30.420.10">
    <property type="entry name" value="Ribonuclease H-like superfamily/Ribonuclease H"/>
    <property type="match status" value="1"/>
</dbReference>
<dbReference type="HAMAP" id="MF_00052_B">
    <property type="entry name" value="RNase_HII_B"/>
    <property type="match status" value="1"/>
</dbReference>
<dbReference type="InterPro" id="IPR022898">
    <property type="entry name" value="RNase_HII"/>
</dbReference>
<dbReference type="InterPro" id="IPR001352">
    <property type="entry name" value="RNase_HII/HIII"/>
</dbReference>
<dbReference type="InterPro" id="IPR024567">
    <property type="entry name" value="RNase_HII/HIII_dom"/>
</dbReference>
<dbReference type="InterPro" id="IPR012337">
    <property type="entry name" value="RNaseH-like_sf"/>
</dbReference>
<dbReference type="InterPro" id="IPR036397">
    <property type="entry name" value="RNaseH_sf"/>
</dbReference>
<dbReference type="NCBIfam" id="NF000595">
    <property type="entry name" value="PRK00015.1-3"/>
    <property type="match status" value="1"/>
</dbReference>
<dbReference type="PANTHER" id="PTHR10954">
    <property type="entry name" value="RIBONUCLEASE H2 SUBUNIT A"/>
    <property type="match status" value="1"/>
</dbReference>
<dbReference type="PANTHER" id="PTHR10954:SF18">
    <property type="entry name" value="RIBONUCLEASE HII"/>
    <property type="match status" value="1"/>
</dbReference>
<dbReference type="Pfam" id="PF01351">
    <property type="entry name" value="RNase_HII"/>
    <property type="match status" value="1"/>
</dbReference>
<dbReference type="SUPFAM" id="SSF53098">
    <property type="entry name" value="Ribonuclease H-like"/>
    <property type="match status" value="1"/>
</dbReference>
<dbReference type="PROSITE" id="PS51975">
    <property type="entry name" value="RNASE_H_2"/>
    <property type="match status" value="1"/>
</dbReference>
<proteinExistence type="inferred from homology"/>
<name>RNH2_BLOFL</name>
<evidence type="ECO:0000255" key="1">
    <source>
        <dbReference type="HAMAP-Rule" id="MF_00052"/>
    </source>
</evidence>
<evidence type="ECO:0000255" key="2">
    <source>
        <dbReference type="PROSITE-ProRule" id="PRU01319"/>
    </source>
</evidence>
<comment type="function">
    <text evidence="1">Endonuclease that specifically degrades the RNA of RNA-DNA hybrids.</text>
</comment>
<comment type="catalytic activity">
    <reaction evidence="1">
        <text>Endonucleolytic cleavage to 5'-phosphomonoester.</text>
        <dbReference type="EC" id="3.1.26.4"/>
    </reaction>
</comment>
<comment type="cofactor">
    <cofactor evidence="1">
        <name>Mn(2+)</name>
        <dbReference type="ChEBI" id="CHEBI:29035"/>
    </cofactor>
    <cofactor evidence="1">
        <name>Mg(2+)</name>
        <dbReference type="ChEBI" id="CHEBI:18420"/>
    </cofactor>
    <text evidence="1">Manganese or magnesium. Binds 1 divalent metal ion per monomer in the absence of substrate. May bind a second metal ion after substrate binding.</text>
</comment>
<comment type="subcellular location">
    <subcellularLocation>
        <location evidence="1">Cytoplasm</location>
    </subcellularLocation>
</comment>
<comment type="similarity">
    <text evidence="1">Belongs to the RNase HII family.</text>
</comment>
<sequence>MCTRKYFLSKKATIVAGVDEVGCGSLVGAVVASAVLMLYPDQEQLFSGLIDSKALSNKKRLRFCNYIQKYSLHWSIGMVNVTEIDQLNIFQARLLSIKRAICNLSMIPDLVLIDGKHAPSLNKNILYQCFVKGDSRIPVISAASIIAKVTRDQAMMMLHTQYPKYGFHRNKGYATVFHLKQLDLYGPTIYHRKTFAPVKYMLSMC</sequence>